<name>RL31_FRAAA</name>
<gene>
    <name evidence="1" type="primary">rpmE</name>
    <name type="ordered locus">FRAAL5947</name>
</gene>
<reference key="1">
    <citation type="journal article" date="2007" name="Genome Res.">
        <title>Genome characteristics of facultatively symbiotic Frankia sp. strains reflect host range and host plant biogeography.</title>
        <authorList>
            <person name="Normand P."/>
            <person name="Lapierre P."/>
            <person name="Tisa L.S."/>
            <person name="Gogarten J.P."/>
            <person name="Alloisio N."/>
            <person name="Bagnarol E."/>
            <person name="Bassi C.A."/>
            <person name="Berry A.M."/>
            <person name="Bickhart D.M."/>
            <person name="Choisne N."/>
            <person name="Couloux A."/>
            <person name="Cournoyer B."/>
            <person name="Cruveiller S."/>
            <person name="Daubin V."/>
            <person name="Demange N."/>
            <person name="Francino M.P."/>
            <person name="Goltsman E."/>
            <person name="Huang Y."/>
            <person name="Kopp O.R."/>
            <person name="Labarre L."/>
            <person name="Lapidus A."/>
            <person name="Lavire C."/>
            <person name="Marechal J."/>
            <person name="Martinez M."/>
            <person name="Mastronunzio J.E."/>
            <person name="Mullin B.C."/>
            <person name="Niemann J."/>
            <person name="Pujic P."/>
            <person name="Rawnsley T."/>
            <person name="Rouy Z."/>
            <person name="Schenowitz C."/>
            <person name="Sellstedt A."/>
            <person name="Tavares F."/>
            <person name="Tomkins J.P."/>
            <person name="Vallenet D."/>
            <person name="Valverde C."/>
            <person name="Wall L.G."/>
            <person name="Wang Y."/>
            <person name="Medigue C."/>
            <person name="Benson D.R."/>
        </authorList>
    </citation>
    <scope>NUCLEOTIDE SEQUENCE [LARGE SCALE GENOMIC DNA]</scope>
    <source>
        <strain>DSM 45986 / CECT 9034 / ACN14a</strain>
    </source>
</reference>
<comment type="function">
    <text evidence="1">Binds the 23S rRNA.</text>
</comment>
<comment type="cofactor">
    <cofactor evidence="1">
        <name>Zn(2+)</name>
        <dbReference type="ChEBI" id="CHEBI:29105"/>
    </cofactor>
    <text evidence="1">Binds 1 zinc ion per subunit.</text>
</comment>
<comment type="subunit">
    <text evidence="1">Part of the 50S ribosomal subunit.</text>
</comment>
<comment type="similarity">
    <text evidence="1">Belongs to the bacterial ribosomal protein bL31 family. Type A subfamily.</text>
</comment>
<protein>
    <recommendedName>
        <fullName evidence="1">Large ribosomal subunit protein bL31</fullName>
    </recommendedName>
    <alternativeName>
        <fullName evidence="2">50S ribosomal protein L31</fullName>
    </alternativeName>
</protein>
<accession>Q0RD99</accession>
<sequence length="78" mass="8705">MKADIHPTYHETTVNCTCGSTFTTRSTKENGVVNAEVCSQCHPFYTGKQKILDVGGRVEKFERRFGRRRPGEKVGGAK</sequence>
<organism>
    <name type="scientific">Frankia alni (strain DSM 45986 / CECT 9034 / ACN14a)</name>
    <dbReference type="NCBI Taxonomy" id="326424"/>
    <lineage>
        <taxon>Bacteria</taxon>
        <taxon>Bacillati</taxon>
        <taxon>Actinomycetota</taxon>
        <taxon>Actinomycetes</taxon>
        <taxon>Frankiales</taxon>
        <taxon>Frankiaceae</taxon>
        <taxon>Frankia</taxon>
    </lineage>
</organism>
<dbReference type="EMBL" id="CT573213">
    <property type="protein sequence ID" value="CAJ64572.1"/>
    <property type="molecule type" value="Genomic_DNA"/>
</dbReference>
<dbReference type="RefSeq" id="WP_011607005.1">
    <property type="nucleotide sequence ID" value="NC_008278.1"/>
</dbReference>
<dbReference type="SMR" id="Q0RD99"/>
<dbReference type="STRING" id="326424.FRAAL5947"/>
<dbReference type="KEGG" id="fal:FRAAL5947"/>
<dbReference type="eggNOG" id="COG0254">
    <property type="taxonomic scope" value="Bacteria"/>
</dbReference>
<dbReference type="HOGENOM" id="CLU_114306_4_3_11"/>
<dbReference type="OrthoDB" id="9803251at2"/>
<dbReference type="Proteomes" id="UP000000657">
    <property type="component" value="Chromosome"/>
</dbReference>
<dbReference type="GO" id="GO:1990904">
    <property type="term" value="C:ribonucleoprotein complex"/>
    <property type="evidence" value="ECO:0007669"/>
    <property type="project" value="UniProtKB-KW"/>
</dbReference>
<dbReference type="GO" id="GO:0005840">
    <property type="term" value="C:ribosome"/>
    <property type="evidence" value="ECO:0007669"/>
    <property type="project" value="UniProtKB-KW"/>
</dbReference>
<dbReference type="GO" id="GO:0046872">
    <property type="term" value="F:metal ion binding"/>
    <property type="evidence" value="ECO:0007669"/>
    <property type="project" value="UniProtKB-KW"/>
</dbReference>
<dbReference type="GO" id="GO:0019843">
    <property type="term" value="F:rRNA binding"/>
    <property type="evidence" value="ECO:0007669"/>
    <property type="project" value="UniProtKB-KW"/>
</dbReference>
<dbReference type="GO" id="GO:0003735">
    <property type="term" value="F:structural constituent of ribosome"/>
    <property type="evidence" value="ECO:0007669"/>
    <property type="project" value="InterPro"/>
</dbReference>
<dbReference type="GO" id="GO:0006412">
    <property type="term" value="P:translation"/>
    <property type="evidence" value="ECO:0007669"/>
    <property type="project" value="UniProtKB-UniRule"/>
</dbReference>
<dbReference type="Gene3D" id="4.10.830.30">
    <property type="entry name" value="Ribosomal protein L31"/>
    <property type="match status" value="1"/>
</dbReference>
<dbReference type="HAMAP" id="MF_00501">
    <property type="entry name" value="Ribosomal_bL31_1"/>
    <property type="match status" value="1"/>
</dbReference>
<dbReference type="InterPro" id="IPR034704">
    <property type="entry name" value="Ribosomal_bL28/bL31-like_sf"/>
</dbReference>
<dbReference type="InterPro" id="IPR002150">
    <property type="entry name" value="Ribosomal_bL31"/>
</dbReference>
<dbReference type="InterPro" id="IPR027491">
    <property type="entry name" value="Ribosomal_bL31_A"/>
</dbReference>
<dbReference type="InterPro" id="IPR042105">
    <property type="entry name" value="Ribosomal_bL31_sf"/>
</dbReference>
<dbReference type="NCBIfam" id="TIGR00105">
    <property type="entry name" value="L31"/>
    <property type="match status" value="1"/>
</dbReference>
<dbReference type="NCBIfam" id="NF000612">
    <property type="entry name" value="PRK00019.1"/>
    <property type="match status" value="1"/>
</dbReference>
<dbReference type="NCBIfam" id="NF001809">
    <property type="entry name" value="PRK00528.1"/>
    <property type="match status" value="1"/>
</dbReference>
<dbReference type="PANTHER" id="PTHR33280">
    <property type="entry name" value="50S RIBOSOMAL PROTEIN L31, CHLOROPLASTIC"/>
    <property type="match status" value="1"/>
</dbReference>
<dbReference type="PANTHER" id="PTHR33280:SF1">
    <property type="entry name" value="LARGE RIBOSOMAL SUBUNIT PROTEIN BL31C"/>
    <property type="match status" value="1"/>
</dbReference>
<dbReference type="Pfam" id="PF01197">
    <property type="entry name" value="Ribosomal_L31"/>
    <property type="match status" value="1"/>
</dbReference>
<dbReference type="PRINTS" id="PR01249">
    <property type="entry name" value="RIBOSOMALL31"/>
</dbReference>
<dbReference type="SUPFAM" id="SSF143800">
    <property type="entry name" value="L28p-like"/>
    <property type="match status" value="1"/>
</dbReference>
<dbReference type="PROSITE" id="PS01143">
    <property type="entry name" value="RIBOSOMAL_L31"/>
    <property type="match status" value="1"/>
</dbReference>
<proteinExistence type="inferred from homology"/>
<evidence type="ECO:0000255" key="1">
    <source>
        <dbReference type="HAMAP-Rule" id="MF_00501"/>
    </source>
</evidence>
<evidence type="ECO:0000305" key="2"/>
<keyword id="KW-0479">Metal-binding</keyword>
<keyword id="KW-1185">Reference proteome</keyword>
<keyword id="KW-0687">Ribonucleoprotein</keyword>
<keyword id="KW-0689">Ribosomal protein</keyword>
<keyword id="KW-0694">RNA-binding</keyword>
<keyword id="KW-0699">rRNA-binding</keyword>
<keyword id="KW-0862">Zinc</keyword>
<feature type="chain" id="PRO_1000126629" description="Large ribosomal subunit protein bL31">
    <location>
        <begin position="1"/>
        <end position="78"/>
    </location>
</feature>
<feature type="binding site" evidence="1">
    <location>
        <position position="16"/>
    </location>
    <ligand>
        <name>Zn(2+)</name>
        <dbReference type="ChEBI" id="CHEBI:29105"/>
    </ligand>
</feature>
<feature type="binding site" evidence="1">
    <location>
        <position position="18"/>
    </location>
    <ligand>
        <name>Zn(2+)</name>
        <dbReference type="ChEBI" id="CHEBI:29105"/>
    </ligand>
</feature>
<feature type="binding site" evidence="1">
    <location>
        <position position="38"/>
    </location>
    <ligand>
        <name>Zn(2+)</name>
        <dbReference type="ChEBI" id="CHEBI:29105"/>
    </ligand>
</feature>
<feature type="binding site" evidence="1">
    <location>
        <position position="41"/>
    </location>
    <ligand>
        <name>Zn(2+)</name>
        <dbReference type="ChEBI" id="CHEBI:29105"/>
    </ligand>
</feature>